<accession>B2RLW4</accession>
<protein>
    <recommendedName>
        <fullName evidence="1">Large ribosomal subunit protein bL17</fullName>
    </recommendedName>
    <alternativeName>
        <fullName evidence="3">50S ribosomal protein L17</fullName>
    </alternativeName>
</protein>
<gene>
    <name evidence="1" type="primary">rplQ</name>
    <name type="ordered locus">PGN_1840</name>
</gene>
<dbReference type="EMBL" id="AP009380">
    <property type="protein sequence ID" value="BAG34359.1"/>
    <property type="molecule type" value="Genomic_DNA"/>
</dbReference>
<dbReference type="RefSeq" id="WP_005873882.1">
    <property type="nucleotide sequence ID" value="NZ_CP025930.1"/>
</dbReference>
<dbReference type="SMR" id="B2RLW4"/>
<dbReference type="GeneID" id="29256992"/>
<dbReference type="KEGG" id="pgn:PGN_1840"/>
<dbReference type="eggNOG" id="COG0203">
    <property type="taxonomic scope" value="Bacteria"/>
</dbReference>
<dbReference type="HOGENOM" id="CLU_074407_0_1_10"/>
<dbReference type="OrthoDB" id="9809073at2"/>
<dbReference type="BioCyc" id="PGIN431947:G1G2V-2054-MONOMER"/>
<dbReference type="Proteomes" id="UP000008842">
    <property type="component" value="Chromosome"/>
</dbReference>
<dbReference type="GO" id="GO:0022625">
    <property type="term" value="C:cytosolic large ribosomal subunit"/>
    <property type="evidence" value="ECO:0007669"/>
    <property type="project" value="TreeGrafter"/>
</dbReference>
<dbReference type="GO" id="GO:0003735">
    <property type="term" value="F:structural constituent of ribosome"/>
    <property type="evidence" value="ECO:0007669"/>
    <property type="project" value="InterPro"/>
</dbReference>
<dbReference type="GO" id="GO:0006412">
    <property type="term" value="P:translation"/>
    <property type="evidence" value="ECO:0007669"/>
    <property type="project" value="UniProtKB-UniRule"/>
</dbReference>
<dbReference type="FunFam" id="3.90.1030.10:FF:000006">
    <property type="entry name" value="50S ribosomal protein L17"/>
    <property type="match status" value="1"/>
</dbReference>
<dbReference type="Gene3D" id="3.90.1030.10">
    <property type="entry name" value="Ribosomal protein L17"/>
    <property type="match status" value="1"/>
</dbReference>
<dbReference type="HAMAP" id="MF_01368">
    <property type="entry name" value="Ribosomal_bL17"/>
    <property type="match status" value="1"/>
</dbReference>
<dbReference type="InterPro" id="IPR000456">
    <property type="entry name" value="Ribosomal_bL17"/>
</dbReference>
<dbReference type="InterPro" id="IPR047859">
    <property type="entry name" value="Ribosomal_bL17_CS"/>
</dbReference>
<dbReference type="InterPro" id="IPR036373">
    <property type="entry name" value="Ribosomal_bL17_sf"/>
</dbReference>
<dbReference type="NCBIfam" id="TIGR00059">
    <property type="entry name" value="L17"/>
    <property type="match status" value="1"/>
</dbReference>
<dbReference type="PANTHER" id="PTHR14413:SF16">
    <property type="entry name" value="LARGE RIBOSOMAL SUBUNIT PROTEIN BL17M"/>
    <property type="match status" value="1"/>
</dbReference>
<dbReference type="PANTHER" id="PTHR14413">
    <property type="entry name" value="RIBOSOMAL PROTEIN L17"/>
    <property type="match status" value="1"/>
</dbReference>
<dbReference type="Pfam" id="PF01196">
    <property type="entry name" value="Ribosomal_L17"/>
    <property type="match status" value="1"/>
</dbReference>
<dbReference type="SUPFAM" id="SSF64263">
    <property type="entry name" value="Prokaryotic ribosomal protein L17"/>
    <property type="match status" value="1"/>
</dbReference>
<dbReference type="PROSITE" id="PS01167">
    <property type="entry name" value="RIBOSOMAL_L17"/>
    <property type="match status" value="1"/>
</dbReference>
<feature type="chain" id="PRO_1000144464" description="Large ribosomal subunit protein bL17">
    <location>
        <begin position="1"/>
        <end position="160"/>
    </location>
</feature>
<feature type="region of interest" description="Disordered" evidence="2">
    <location>
        <begin position="128"/>
        <end position="160"/>
    </location>
</feature>
<feature type="compositionally biased region" description="Basic residues" evidence="2">
    <location>
        <begin position="129"/>
        <end position="140"/>
    </location>
</feature>
<reference key="1">
    <citation type="journal article" date="2008" name="DNA Res.">
        <title>Determination of the genome sequence of Porphyromonas gingivalis strain ATCC 33277 and genomic comparison with strain W83 revealed extensive genome rearrangements in P. gingivalis.</title>
        <authorList>
            <person name="Naito M."/>
            <person name="Hirakawa H."/>
            <person name="Yamashita A."/>
            <person name="Ohara N."/>
            <person name="Shoji M."/>
            <person name="Yukitake H."/>
            <person name="Nakayama K."/>
            <person name="Toh H."/>
            <person name="Yoshimura F."/>
            <person name="Kuhara S."/>
            <person name="Hattori M."/>
            <person name="Hayashi T."/>
            <person name="Nakayama K."/>
        </authorList>
    </citation>
    <scope>NUCLEOTIDE SEQUENCE [LARGE SCALE GENOMIC DNA]</scope>
    <source>
        <strain>ATCC 33277 / DSM 20709 / CIP 103683 / JCM 12257 / NCTC 11834 / 2561</strain>
    </source>
</reference>
<proteinExistence type="inferred from homology"/>
<comment type="subunit">
    <text evidence="1">Part of the 50S ribosomal subunit. Contacts protein L32.</text>
</comment>
<comment type="similarity">
    <text evidence="1">Belongs to the bacterial ribosomal protein bL17 family.</text>
</comment>
<evidence type="ECO:0000255" key="1">
    <source>
        <dbReference type="HAMAP-Rule" id="MF_01368"/>
    </source>
</evidence>
<evidence type="ECO:0000256" key="2">
    <source>
        <dbReference type="SAM" id="MobiDB-lite"/>
    </source>
</evidence>
<evidence type="ECO:0000305" key="3"/>
<sequence>MRHNKKFNHLGRKAAHRKAMLSNMAASLILHKRIFTTVAKAKALRIYVEPLLTKTKEDTTHSRRIAFSYLQNKYALKELFGDVAAKIADRPGGYTRILKTGYRLGDNAAMCFIELVDYNENMLGEAAKKATKTRRSRKRKSADVVVEAAPAEETPKAAEE</sequence>
<name>RL17_PORG3</name>
<keyword id="KW-0687">Ribonucleoprotein</keyword>
<keyword id="KW-0689">Ribosomal protein</keyword>
<organism>
    <name type="scientific">Porphyromonas gingivalis (strain ATCC 33277 / DSM 20709 / CIP 103683 / JCM 12257 / NCTC 11834 / 2561)</name>
    <dbReference type="NCBI Taxonomy" id="431947"/>
    <lineage>
        <taxon>Bacteria</taxon>
        <taxon>Pseudomonadati</taxon>
        <taxon>Bacteroidota</taxon>
        <taxon>Bacteroidia</taxon>
        <taxon>Bacteroidales</taxon>
        <taxon>Porphyromonadaceae</taxon>
        <taxon>Porphyromonas</taxon>
    </lineage>
</organism>